<protein>
    <recommendedName>
        <fullName evidence="1">Cytidylate kinase</fullName>
        <shortName evidence="1">CK</shortName>
        <ecNumber evidence="1">2.7.4.25</ecNumber>
    </recommendedName>
    <alternativeName>
        <fullName evidence="1">Cytidine monophosphate kinase</fullName>
        <shortName evidence="1">CMP kinase</shortName>
    </alternativeName>
</protein>
<proteinExistence type="inferred from homology"/>
<name>KCY_BRUME</name>
<sequence>MKSFVVAPFIVVIDGPAASGKGTLARRIATHYGMPHLDTGLTYRAVAKALLDKGLPLDDEALATDAALSLDLLAMDKAVLSAHAIGEAASKVAVMPAVRRALVEAQRHFANALPSSVLDGRDIGTVVCPDAAIKLFVTASPEVRARRRFDEVLARGDTADFAEILADLKKRDERDMNRTDSPLRPAEDAHLLDTSEMSIEAAFLAAKKLIDHALAQHRG</sequence>
<dbReference type="EC" id="2.7.4.25" evidence="1"/>
<dbReference type="EMBL" id="AE008917">
    <property type="protein sequence ID" value="AAL53097.1"/>
    <property type="molecule type" value="Genomic_DNA"/>
</dbReference>
<dbReference type="PIR" id="AF3491">
    <property type="entry name" value="AF3491"/>
</dbReference>
<dbReference type="RefSeq" id="WP_004684608.1">
    <property type="nucleotide sequence ID" value="NZ_GG703778.1"/>
</dbReference>
<dbReference type="SMR" id="Q8YEG2"/>
<dbReference type="GeneID" id="29594805"/>
<dbReference type="KEGG" id="bme:BMEI1916"/>
<dbReference type="KEGG" id="bmel:DK63_1573"/>
<dbReference type="PATRIC" id="fig|224914.52.peg.1659"/>
<dbReference type="eggNOG" id="COG0283">
    <property type="taxonomic scope" value="Bacteria"/>
</dbReference>
<dbReference type="PhylomeDB" id="Q8YEG2"/>
<dbReference type="Proteomes" id="UP000000419">
    <property type="component" value="Chromosome I"/>
</dbReference>
<dbReference type="GO" id="GO:0005737">
    <property type="term" value="C:cytoplasm"/>
    <property type="evidence" value="ECO:0007669"/>
    <property type="project" value="UniProtKB-SubCell"/>
</dbReference>
<dbReference type="GO" id="GO:0005524">
    <property type="term" value="F:ATP binding"/>
    <property type="evidence" value="ECO:0007669"/>
    <property type="project" value="UniProtKB-UniRule"/>
</dbReference>
<dbReference type="GO" id="GO:0036430">
    <property type="term" value="F:CMP kinase activity"/>
    <property type="evidence" value="ECO:0007669"/>
    <property type="project" value="RHEA"/>
</dbReference>
<dbReference type="GO" id="GO:0036431">
    <property type="term" value="F:dCMP kinase activity"/>
    <property type="evidence" value="ECO:0007669"/>
    <property type="project" value="RHEA"/>
</dbReference>
<dbReference type="GO" id="GO:0006220">
    <property type="term" value="P:pyrimidine nucleotide metabolic process"/>
    <property type="evidence" value="ECO:0007669"/>
    <property type="project" value="UniProtKB-UniRule"/>
</dbReference>
<dbReference type="CDD" id="cd02020">
    <property type="entry name" value="CMPK"/>
    <property type="match status" value="1"/>
</dbReference>
<dbReference type="Gene3D" id="3.40.50.300">
    <property type="entry name" value="P-loop containing nucleotide triphosphate hydrolases"/>
    <property type="match status" value="1"/>
</dbReference>
<dbReference type="HAMAP" id="MF_00238">
    <property type="entry name" value="Cytidyl_kinase_type1"/>
    <property type="match status" value="1"/>
</dbReference>
<dbReference type="InterPro" id="IPR003136">
    <property type="entry name" value="Cytidylate_kin"/>
</dbReference>
<dbReference type="InterPro" id="IPR011994">
    <property type="entry name" value="Cytidylate_kinase_dom"/>
</dbReference>
<dbReference type="InterPro" id="IPR027417">
    <property type="entry name" value="P-loop_NTPase"/>
</dbReference>
<dbReference type="NCBIfam" id="TIGR00017">
    <property type="entry name" value="cmk"/>
    <property type="match status" value="1"/>
</dbReference>
<dbReference type="Pfam" id="PF02224">
    <property type="entry name" value="Cytidylate_kin"/>
    <property type="match status" value="1"/>
</dbReference>
<dbReference type="SUPFAM" id="SSF52540">
    <property type="entry name" value="P-loop containing nucleoside triphosphate hydrolases"/>
    <property type="match status" value="1"/>
</dbReference>
<accession>Q8YEG2</accession>
<comment type="catalytic activity">
    <reaction evidence="1">
        <text>CMP + ATP = CDP + ADP</text>
        <dbReference type="Rhea" id="RHEA:11600"/>
        <dbReference type="ChEBI" id="CHEBI:30616"/>
        <dbReference type="ChEBI" id="CHEBI:58069"/>
        <dbReference type="ChEBI" id="CHEBI:60377"/>
        <dbReference type="ChEBI" id="CHEBI:456216"/>
        <dbReference type="EC" id="2.7.4.25"/>
    </reaction>
</comment>
<comment type="catalytic activity">
    <reaction evidence="1">
        <text>dCMP + ATP = dCDP + ADP</text>
        <dbReference type="Rhea" id="RHEA:25094"/>
        <dbReference type="ChEBI" id="CHEBI:30616"/>
        <dbReference type="ChEBI" id="CHEBI:57566"/>
        <dbReference type="ChEBI" id="CHEBI:58593"/>
        <dbReference type="ChEBI" id="CHEBI:456216"/>
        <dbReference type="EC" id="2.7.4.25"/>
    </reaction>
</comment>
<comment type="subcellular location">
    <subcellularLocation>
        <location evidence="1">Cytoplasm</location>
    </subcellularLocation>
</comment>
<comment type="similarity">
    <text evidence="1">Belongs to the cytidylate kinase family. Type 1 subfamily.</text>
</comment>
<reference key="1">
    <citation type="journal article" date="2002" name="Proc. Natl. Acad. Sci. U.S.A.">
        <title>The genome sequence of the facultative intracellular pathogen Brucella melitensis.</title>
        <authorList>
            <person name="DelVecchio V.G."/>
            <person name="Kapatral V."/>
            <person name="Redkar R.J."/>
            <person name="Patra G."/>
            <person name="Mujer C."/>
            <person name="Los T."/>
            <person name="Ivanova N."/>
            <person name="Anderson I."/>
            <person name="Bhattacharyya A."/>
            <person name="Lykidis A."/>
            <person name="Reznik G."/>
            <person name="Jablonski L."/>
            <person name="Larsen N."/>
            <person name="D'Souza M."/>
            <person name="Bernal A."/>
            <person name="Mazur M."/>
            <person name="Goltsman E."/>
            <person name="Selkov E."/>
            <person name="Elzer P.H."/>
            <person name="Hagius S."/>
            <person name="O'Callaghan D."/>
            <person name="Letesson J.-J."/>
            <person name="Haselkorn R."/>
            <person name="Kyrpides N.C."/>
            <person name="Overbeek R."/>
        </authorList>
    </citation>
    <scope>NUCLEOTIDE SEQUENCE [LARGE SCALE GENOMIC DNA]</scope>
    <source>
        <strain>ATCC 23456 / CCUG 17765 / NCTC 10094 / 16M</strain>
    </source>
</reference>
<organism>
    <name type="scientific">Brucella melitensis biotype 1 (strain ATCC 23456 / CCUG 17765 / NCTC 10094 / 16M)</name>
    <dbReference type="NCBI Taxonomy" id="224914"/>
    <lineage>
        <taxon>Bacteria</taxon>
        <taxon>Pseudomonadati</taxon>
        <taxon>Pseudomonadota</taxon>
        <taxon>Alphaproteobacteria</taxon>
        <taxon>Hyphomicrobiales</taxon>
        <taxon>Brucellaceae</taxon>
        <taxon>Brucella/Ochrobactrum group</taxon>
        <taxon>Brucella</taxon>
    </lineage>
</organism>
<feature type="chain" id="PRO_0000131891" description="Cytidylate kinase">
    <location>
        <begin position="1"/>
        <end position="219"/>
    </location>
</feature>
<feature type="binding site" evidence="1">
    <location>
        <begin position="15"/>
        <end position="23"/>
    </location>
    <ligand>
        <name>ATP</name>
        <dbReference type="ChEBI" id="CHEBI:30616"/>
    </ligand>
</feature>
<keyword id="KW-0067">ATP-binding</keyword>
<keyword id="KW-0963">Cytoplasm</keyword>
<keyword id="KW-0418">Kinase</keyword>
<keyword id="KW-0547">Nucleotide-binding</keyword>
<keyword id="KW-0808">Transferase</keyword>
<gene>
    <name evidence="1" type="primary">cmk</name>
    <name type="ordered locus">BMEI1916</name>
</gene>
<evidence type="ECO:0000255" key="1">
    <source>
        <dbReference type="HAMAP-Rule" id="MF_00238"/>
    </source>
</evidence>